<organism>
    <name type="scientific">Gibberella moniliformis (strain M3125 / FGSC 7600)</name>
    <name type="common">Maize ear and stalk rot fungus</name>
    <name type="synonym">Fusarium verticillioides</name>
    <dbReference type="NCBI Taxonomy" id="334819"/>
    <lineage>
        <taxon>Eukaryota</taxon>
        <taxon>Fungi</taxon>
        <taxon>Dikarya</taxon>
        <taxon>Ascomycota</taxon>
        <taxon>Pezizomycotina</taxon>
        <taxon>Sordariomycetes</taxon>
        <taxon>Hypocreomycetidae</taxon>
        <taxon>Hypocreales</taxon>
        <taxon>Nectriaceae</taxon>
        <taxon>Fusarium</taxon>
        <taxon>Fusarium fujikuroi species complex</taxon>
    </lineage>
</organism>
<comment type="function">
    <text evidence="1 14">Efflux pump involved in export of fusaric acid, a mycotoxin with low to moderate toxicity to animals and humans, but with high phytotoxic properties (PubMed:25372119). Constitutes a self-protecting mechanism of the fungus against critical levels of FSA within the cell (By similarity).</text>
</comment>
<comment type="subcellular location">
    <subcellularLocation>
        <location evidence="2">Cell membrane</location>
        <topology evidence="3">Multi-pass membrane protein</topology>
    </subcellularLocation>
</comment>
<comment type="induction">
    <text evidence="10">Expression is positively regulated by the secondary metabolism regulator LAE1 (PubMed:22713715).</text>
</comment>
<comment type="disruption phenotype">
    <text evidence="14">Strongly reduces production of fusaric acid (PubMed:25372119).</text>
</comment>
<comment type="biotechnology">
    <text evidence="6 7 8 9 11 12 13">Fusaric acid is phytotoxic to plants such as cotton and banana (PubMed:20955724, PubMed:23922960). It has been shown to induce programmed cell death in plants (PubMed:16868776, PubMed:23838885). In addition to a mild toxicity to animals, fusaric acid exhibits acanthamoebicidal, antioomycete, and antimycobacterial activities (PubMed:17927749, PubMed:21811925, PubMed:22864988).</text>
</comment>
<comment type="similarity">
    <text evidence="16">Belongs to the major facilitator superfamily. DHA1 family. Polyamines/proton antiporter (TC 2.A.1.2.16) subfamily.</text>
</comment>
<comment type="sequence caution" evidence="16">
    <conflict type="erroneous initiation">
        <sequence resource="EMBL-CDS" id="EWG54279"/>
    </conflict>
    <text>Extended N-terminus.</text>
</comment>
<comment type="sequence caution" evidence="16">
    <conflict type="erroneous initiation">
        <sequence resource="EMBL-CDS" id="EWG54280"/>
    </conflict>
    <text>Extended N-terminus.</text>
</comment>
<dbReference type="EMBL" id="CM000580">
    <property type="protein sequence ID" value="EWG54279.1"/>
    <property type="status" value="ALT_INIT"/>
    <property type="molecule type" value="Genomic_DNA"/>
</dbReference>
<dbReference type="EMBL" id="CM000580">
    <property type="protein sequence ID" value="EWG54280.1"/>
    <property type="status" value="ALT_INIT"/>
    <property type="molecule type" value="Genomic_DNA"/>
</dbReference>
<dbReference type="RefSeq" id="XP_018760470.1">
    <property type="nucleotide sequence ID" value="XM_018901875.1"/>
</dbReference>
<dbReference type="RefSeq" id="XP_018760471.1">
    <property type="nucleotide sequence ID" value="XM_018901876.1"/>
</dbReference>
<dbReference type="SMR" id="W7N2B4"/>
<dbReference type="STRING" id="334819.W7N2B4"/>
<dbReference type="GlyCosmos" id="W7N2B4">
    <property type="glycosylation" value="1 site, No reported glycans"/>
</dbReference>
<dbReference type="EnsemblFungi" id="FVEG_12533T0">
    <property type="protein sequence ID" value="FVEG_12533T0"/>
    <property type="gene ID" value="FVEG_12533"/>
</dbReference>
<dbReference type="GeneID" id="30069966"/>
<dbReference type="KEGG" id="fvr:FVEG_12533"/>
<dbReference type="eggNOG" id="KOG0255">
    <property type="taxonomic scope" value="Eukaryota"/>
</dbReference>
<dbReference type="OMA" id="MYMCFAA"/>
<dbReference type="OrthoDB" id="110044at110618"/>
<dbReference type="PHI-base" id="PHI:3381"/>
<dbReference type="Proteomes" id="UP000009096">
    <property type="component" value="Chromosome 3"/>
</dbReference>
<dbReference type="GO" id="GO:0005886">
    <property type="term" value="C:plasma membrane"/>
    <property type="evidence" value="ECO:0007669"/>
    <property type="project" value="UniProtKB-SubCell"/>
</dbReference>
<dbReference type="GO" id="GO:0022857">
    <property type="term" value="F:transmembrane transporter activity"/>
    <property type="evidence" value="ECO:0007669"/>
    <property type="project" value="InterPro"/>
</dbReference>
<dbReference type="CDD" id="cd17323">
    <property type="entry name" value="MFS_Tpo1_MDR_like"/>
    <property type="match status" value="1"/>
</dbReference>
<dbReference type="FunFam" id="1.20.1250.20:FF:000011">
    <property type="entry name" value="MFS multidrug transporter, putative"/>
    <property type="match status" value="1"/>
</dbReference>
<dbReference type="Gene3D" id="1.20.1250.20">
    <property type="entry name" value="MFS general substrate transporter like domains"/>
    <property type="match status" value="1"/>
</dbReference>
<dbReference type="InterPro" id="IPR011701">
    <property type="entry name" value="MFS"/>
</dbReference>
<dbReference type="InterPro" id="IPR020846">
    <property type="entry name" value="MFS_dom"/>
</dbReference>
<dbReference type="InterPro" id="IPR036259">
    <property type="entry name" value="MFS_trans_sf"/>
</dbReference>
<dbReference type="PANTHER" id="PTHR23502">
    <property type="entry name" value="MAJOR FACILITATOR SUPERFAMILY"/>
    <property type="match status" value="1"/>
</dbReference>
<dbReference type="PANTHER" id="PTHR23502:SF186">
    <property type="entry name" value="MAJOR FACILITATOR SUPERFAMILY (MFS) PROFILE DOMAIN-CONTAINING PROTEIN"/>
    <property type="match status" value="1"/>
</dbReference>
<dbReference type="Pfam" id="PF07690">
    <property type="entry name" value="MFS_1"/>
    <property type="match status" value="1"/>
</dbReference>
<dbReference type="SUPFAM" id="SSF103473">
    <property type="entry name" value="MFS general substrate transporter"/>
    <property type="match status" value="1"/>
</dbReference>
<dbReference type="PROSITE" id="PS50850">
    <property type="entry name" value="MFS"/>
    <property type="match status" value="1"/>
</dbReference>
<gene>
    <name evidence="15" type="primary">FUB11</name>
    <name type="ORF">FVEG_12533</name>
</gene>
<reference key="1">
    <citation type="journal article" date="2010" name="Nature">
        <title>Comparative genomics reveals mobile pathogenicity chromosomes in Fusarium.</title>
        <authorList>
            <person name="Ma L.-J."/>
            <person name="van der Does H.C."/>
            <person name="Borkovich K.A."/>
            <person name="Coleman J.J."/>
            <person name="Daboussi M.-J."/>
            <person name="Di Pietro A."/>
            <person name="Dufresne M."/>
            <person name="Freitag M."/>
            <person name="Grabherr M."/>
            <person name="Henrissat B."/>
            <person name="Houterman P.M."/>
            <person name="Kang S."/>
            <person name="Shim W.-B."/>
            <person name="Woloshuk C."/>
            <person name="Xie X."/>
            <person name="Xu J.-R."/>
            <person name="Antoniw J."/>
            <person name="Baker S.E."/>
            <person name="Bluhm B.H."/>
            <person name="Breakspear A."/>
            <person name="Brown D.W."/>
            <person name="Butchko R.A.E."/>
            <person name="Chapman S."/>
            <person name="Coulson R."/>
            <person name="Coutinho P.M."/>
            <person name="Danchin E.G.J."/>
            <person name="Diener A."/>
            <person name="Gale L.R."/>
            <person name="Gardiner D.M."/>
            <person name="Goff S."/>
            <person name="Hammond-Kosack K.E."/>
            <person name="Hilburn K."/>
            <person name="Hua-Van A."/>
            <person name="Jonkers W."/>
            <person name="Kazan K."/>
            <person name="Kodira C.D."/>
            <person name="Koehrsen M."/>
            <person name="Kumar L."/>
            <person name="Lee Y.-H."/>
            <person name="Li L."/>
            <person name="Manners J.M."/>
            <person name="Miranda-Saavedra D."/>
            <person name="Mukherjee M."/>
            <person name="Park G."/>
            <person name="Park J."/>
            <person name="Park S.-Y."/>
            <person name="Proctor R.H."/>
            <person name="Regev A."/>
            <person name="Ruiz-Roldan M.C."/>
            <person name="Sain D."/>
            <person name="Sakthikumar S."/>
            <person name="Sykes S."/>
            <person name="Schwartz D.C."/>
            <person name="Turgeon B.G."/>
            <person name="Wapinski I."/>
            <person name="Yoder O."/>
            <person name="Young S."/>
            <person name="Zeng Q."/>
            <person name="Zhou S."/>
            <person name="Galagan J."/>
            <person name="Cuomo C.A."/>
            <person name="Kistler H.C."/>
            <person name="Rep M."/>
        </authorList>
    </citation>
    <scope>NUCLEOTIDE SEQUENCE [LARGE SCALE GENOMIC DNA]</scope>
    <source>
        <strain>M3125 / FGSC 7600</strain>
    </source>
</reference>
<reference key="2">
    <citation type="journal article" date="2006" name="Planta">
        <title>Fusaric acid induces apoptosis in saffron root-tip cells: roles of caspase-like activity, cytochrome c, and H2O2.</title>
        <authorList>
            <person name="Samadi L."/>
            <person name="Shahsavan Behboodi B."/>
        </authorList>
    </citation>
    <scope>BIOTECHNOLOGY</scope>
</reference>
<reference key="3">
    <citation type="journal article" date="2008" name="J. Appl. Microbiol.">
        <title>Bikaverin and fusaric acid from Fusarium oxysporum show antioomycete activity against Phytophthora infestans.</title>
        <authorList>
            <person name="Son S.W."/>
            <person name="Kim H.Y."/>
            <person name="Choi G.J."/>
            <person name="Lim H.K."/>
            <person name="Jang K.S."/>
            <person name="Lee S.O."/>
            <person name="Lee S."/>
            <person name="Sung N.D."/>
            <person name="Kim J.C."/>
        </authorList>
    </citation>
    <scope>BIOTECHNOLOGY</scope>
</reference>
<reference key="4">
    <citation type="journal article" date="2011" name="Arch. Pharm. Res.">
        <title>Antimycobacterial activity of fusaric acid from a mangrove endophyte and its metal complexes.</title>
        <authorList>
            <person name="Pan J.H."/>
            <person name="Chen Y."/>
            <person name="Huang Y.H."/>
            <person name="Tao Y.W."/>
            <person name="Wang J."/>
            <person name="Li Y."/>
            <person name="Peng Y."/>
            <person name="Dong T."/>
            <person name="Lai X.M."/>
            <person name="Lin Y.C."/>
        </authorList>
    </citation>
    <scope>BIOTECHNOLOGY</scope>
</reference>
<reference key="5">
    <citation type="journal article" date="2011" name="Toxicon">
        <title>Phytotoxicity of fusaric acid and analogs to cotton.</title>
        <authorList>
            <person name="Stipanovic R.D."/>
            <person name="Puckhaber L.S."/>
            <person name="Liu J."/>
            <person name="Bell A.A."/>
        </authorList>
    </citation>
    <scope>BIOTECHNOLOGY</scope>
</reference>
<reference key="6">
    <citation type="journal article" date="2012" name="Fungal Genet. Biol.">
        <title>Lae1 regulates expression of multiple secondary metabolite gene clusters in Fusarium verticillioides.</title>
        <authorList>
            <person name="Butchko R.A."/>
            <person name="Brown D.W."/>
            <person name="Busman M."/>
            <person name="Tudzynski B."/>
            <person name="Wiemann P."/>
        </authorList>
    </citation>
    <scope>INDUCTION</scope>
</reference>
<reference key="7">
    <citation type="journal article" date="2012" name="Planta Med.">
        <title>In vitro acanthamoebicidal activity of fusaric acid and dehydrofusaric acid from an endophytic fungus Fusarium sp. Tlau3.</title>
        <authorList>
            <person name="Boonman N."/>
            <person name="Prachya S."/>
            <person name="Boonmee A."/>
            <person name="Kittakoop P."/>
            <person name="Wiyakrutta S."/>
            <person name="Sriubolmas N."/>
            <person name="Warit S."/>
            <person name="Dharmkrong-At Chusattayanond A."/>
        </authorList>
    </citation>
    <scope>BIOTECHNOLOGY</scope>
</reference>
<reference key="8">
    <citation type="journal article" date="2013" name="Planta">
        <title>Fusaric acid induction of programmed cell death modulated through nitric oxide signalling in tobacco suspension cells.</title>
        <authorList>
            <person name="Jiao J."/>
            <person name="Zhou B."/>
            <person name="Zhu X."/>
            <person name="Gao Z."/>
            <person name="Liang Y."/>
        </authorList>
    </citation>
    <scope>BIOTECHNOLOGY</scope>
</reference>
<reference key="9">
    <citation type="journal article" date="2013" name="PLoS ONE">
        <title>Contamination of bananas with beauvericin and fusaric acid produced by Fusarium oxysporum f. sp. cubense.</title>
        <authorList>
            <person name="Li C."/>
            <person name="Zuo C."/>
            <person name="Deng G."/>
            <person name="Kuang R."/>
            <person name="Yang Q."/>
            <person name="Hu C."/>
            <person name="Sheng O."/>
            <person name="Zhang S."/>
            <person name="Ma L."/>
            <person name="Wei Y."/>
            <person name="Yang J."/>
            <person name="Liu S."/>
            <person name="Biswas M.K."/>
            <person name="Viljoen A."/>
            <person name="Yi G."/>
        </authorList>
    </citation>
    <scope>BIOTECHNOLOGY</scope>
</reference>
<reference key="10">
    <citation type="journal article" date="2015" name="Mol. Plant Microbe Interact.">
        <title>Identification of a 12-gene fusaric acid biosynthetic gene cluster in Fusarium species through comparative and functional genomics.</title>
        <authorList>
            <person name="Brown D.W."/>
            <person name="Lee S.H."/>
            <person name="Kim L.H."/>
            <person name="Ryu J.G."/>
            <person name="Lee S."/>
            <person name="Seo Y."/>
            <person name="Kim Y.H."/>
            <person name="Busman M."/>
            <person name="Yun S.H."/>
            <person name="Proctor R.H."/>
            <person name="Lee T."/>
        </authorList>
    </citation>
    <scope>FUNCTION</scope>
    <scope>DISRUPTION PHENOTYPE</scope>
</reference>
<accession>W7N2B4</accession>
<sequence length="593" mass="65077">MAIDPQPSSPSLSSETIANDTIGNDNNVNEPSVEPKTQEHQHTVPPRLSRIYSQAHHISKSFIDQNYPGEGTTQAPYRINFLPDDSQNAQLLPRWKKWAFVLLQSLACLATTFASSAYSGGIKQIIRAFGISQEVATLGISLYVLGFTFGPLVWAPLSELYGRKKVFFFTFMVATAFSAGAAGAGSIASLLVLRFLTGSIGSAPLSNAPALIADMFDKSERGLAMCMFSGAPFLGPAIGPIAGGFLGETAGWRWLHGLMAAFTGVTWIACTVFIPETYAPYILRKRAQHMSKLTGKVYISTLDADKPPSSAAHQLKNALTRPWLLLFKEPIVFITSIYISIIYGTMYMCFAAFPIVFQQGRGWSQGIGGLAFTGIVIGVILSIISFAFEDKRYARAARSRGAPMEPEDRLPPAIMGSLLIPIGLFWFAWTTFPSIHWIVPIIGTVFFAWGLVLVFMALLNYLIDSYVIFAASIMAANSALRSLFGAAFPLFTRQMYDGLGVQWASSIPAFLALACVPFPFLFYKYGRQIRMKCEYAAEAANVLQKMRSLHVAVTEDDAMNEAEEMWRARTHNSHASAAHSHGHRRSLSYTRSA</sequence>
<feature type="chain" id="PRO_0000437352" description="Efflux pump FUB11">
    <location>
        <begin position="1"/>
        <end position="593"/>
    </location>
</feature>
<feature type="transmembrane region" description="Helical" evidence="3">
    <location>
        <begin position="98"/>
        <end position="118"/>
    </location>
</feature>
<feature type="transmembrane region" description="Helical" evidence="3">
    <location>
        <begin position="135"/>
        <end position="155"/>
    </location>
</feature>
<feature type="transmembrane region" description="Helical" evidence="3">
    <location>
        <begin position="167"/>
        <end position="187"/>
    </location>
</feature>
<feature type="transmembrane region" description="Helical" evidence="3">
    <location>
        <begin position="195"/>
        <end position="215"/>
    </location>
</feature>
<feature type="transmembrane region" description="Helical" evidence="3">
    <location>
        <begin position="227"/>
        <end position="247"/>
    </location>
</feature>
<feature type="transmembrane region" description="Helical" evidence="3">
    <location>
        <begin position="254"/>
        <end position="274"/>
    </location>
</feature>
<feature type="transmembrane region" description="Helical" evidence="3">
    <location>
        <begin position="337"/>
        <end position="357"/>
    </location>
</feature>
<feature type="transmembrane region" description="Helical" evidence="3">
    <location>
        <begin position="367"/>
        <end position="387"/>
    </location>
</feature>
<feature type="transmembrane region" description="Helical" evidence="3">
    <location>
        <begin position="410"/>
        <end position="430"/>
    </location>
</feature>
<feature type="transmembrane region" description="Helical" evidence="3">
    <location>
        <begin position="438"/>
        <end position="458"/>
    </location>
</feature>
<feature type="transmembrane region" description="Helical" evidence="3">
    <location>
        <begin position="468"/>
        <end position="488"/>
    </location>
</feature>
<feature type="transmembrane region" description="Helical" evidence="3">
    <location>
        <begin position="503"/>
        <end position="523"/>
    </location>
</feature>
<feature type="region of interest" description="Disordered" evidence="5">
    <location>
        <begin position="1"/>
        <end position="45"/>
    </location>
</feature>
<feature type="region of interest" description="Disordered" evidence="5">
    <location>
        <begin position="570"/>
        <end position="593"/>
    </location>
</feature>
<feature type="compositionally biased region" description="Polar residues" evidence="5">
    <location>
        <begin position="9"/>
        <end position="30"/>
    </location>
</feature>
<feature type="glycosylation site" description="N-linked (GlcNAc...) asparagine" evidence="4">
    <location>
        <position position="19"/>
    </location>
</feature>
<name>FUB11_GIBM7</name>
<proteinExistence type="evidence at protein level"/>
<keyword id="KW-1003">Cell membrane</keyword>
<keyword id="KW-0325">Glycoprotein</keyword>
<keyword id="KW-0472">Membrane</keyword>
<keyword id="KW-1185">Reference proteome</keyword>
<keyword id="KW-0812">Transmembrane</keyword>
<keyword id="KW-1133">Transmembrane helix</keyword>
<keyword id="KW-0813">Transport</keyword>
<protein>
    <recommendedName>
        <fullName evidence="15">Efflux pump FUB11</fullName>
    </recommendedName>
    <alternativeName>
        <fullName evidence="15">Fusaric acid biosynthesis protein 11</fullName>
    </alternativeName>
</protein>
<evidence type="ECO:0000250" key="1">
    <source>
        <dbReference type="UniProtKB" id="A0A0B5EMG9"/>
    </source>
</evidence>
<evidence type="ECO:0000250" key="2">
    <source>
        <dbReference type="UniProtKB" id="S0DRX3"/>
    </source>
</evidence>
<evidence type="ECO:0000255" key="3"/>
<evidence type="ECO:0000255" key="4">
    <source>
        <dbReference type="PROSITE-ProRule" id="PRU00498"/>
    </source>
</evidence>
<evidence type="ECO:0000256" key="5">
    <source>
        <dbReference type="SAM" id="MobiDB-lite"/>
    </source>
</evidence>
<evidence type="ECO:0000269" key="6">
    <source>
    </source>
</evidence>
<evidence type="ECO:0000269" key="7">
    <source>
    </source>
</evidence>
<evidence type="ECO:0000269" key="8">
    <source>
    </source>
</evidence>
<evidence type="ECO:0000269" key="9">
    <source>
    </source>
</evidence>
<evidence type="ECO:0000269" key="10">
    <source>
    </source>
</evidence>
<evidence type="ECO:0000269" key="11">
    <source>
    </source>
</evidence>
<evidence type="ECO:0000269" key="12">
    <source>
    </source>
</evidence>
<evidence type="ECO:0000269" key="13">
    <source>
    </source>
</evidence>
<evidence type="ECO:0000269" key="14">
    <source>
    </source>
</evidence>
<evidence type="ECO:0000303" key="15">
    <source>
    </source>
</evidence>
<evidence type="ECO:0000305" key="16"/>